<protein>
    <recommendedName>
        <fullName evidence="1">Threonine--tRNA ligase</fullName>
        <ecNumber evidence="1">6.1.1.3</ecNumber>
    </recommendedName>
    <alternativeName>
        <fullName evidence="1">Threonyl-tRNA synthetase</fullName>
        <shortName evidence="1">ThrRS</shortName>
    </alternativeName>
</protein>
<gene>
    <name evidence="1" type="primary">thrS</name>
    <name type="ordered locus">MGAS10750_Spy0440</name>
</gene>
<proteinExistence type="inferred from homology"/>
<organism>
    <name type="scientific">Streptococcus pyogenes serotype M4 (strain MGAS10750)</name>
    <dbReference type="NCBI Taxonomy" id="370554"/>
    <lineage>
        <taxon>Bacteria</taxon>
        <taxon>Bacillati</taxon>
        <taxon>Bacillota</taxon>
        <taxon>Bacilli</taxon>
        <taxon>Lactobacillales</taxon>
        <taxon>Streptococcaceae</taxon>
        <taxon>Streptococcus</taxon>
    </lineage>
</organism>
<name>SYT_STRPF</name>
<dbReference type="EC" id="6.1.1.3" evidence="1"/>
<dbReference type="EMBL" id="CP000262">
    <property type="protein sequence ID" value="ABF37390.1"/>
    <property type="molecule type" value="Genomic_DNA"/>
</dbReference>
<dbReference type="SMR" id="Q1J7X1"/>
<dbReference type="KEGG" id="spi:MGAS10750_Spy0440"/>
<dbReference type="HOGENOM" id="CLU_008554_0_1_9"/>
<dbReference type="Proteomes" id="UP000002434">
    <property type="component" value="Chromosome"/>
</dbReference>
<dbReference type="GO" id="GO:0005737">
    <property type="term" value="C:cytoplasm"/>
    <property type="evidence" value="ECO:0007669"/>
    <property type="project" value="UniProtKB-SubCell"/>
</dbReference>
<dbReference type="GO" id="GO:0005524">
    <property type="term" value="F:ATP binding"/>
    <property type="evidence" value="ECO:0007669"/>
    <property type="project" value="UniProtKB-UniRule"/>
</dbReference>
<dbReference type="GO" id="GO:0140096">
    <property type="term" value="F:catalytic activity, acting on a protein"/>
    <property type="evidence" value="ECO:0007669"/>
    <property type="project" value="UniProtKB-ARBA"/>
</dbReference>
<dbReference type="GO" id="GO:0046872">
    <property type="term" value="F:metal ion binding"/>
    <property type="evidence" value="ECO:0007669"/>
    <property type="project" value="UniProtKB-KW"/>
</dbReference>
<dbReference type="GO" id="GO:0004829">
    <property type="term" value="F:threonine-tRNA ligase activity"/>
    <property type="evidence" value="ECO:0007669"/>
    <property type="project" value="UniProtKB-UniRule"/>
</dbReference>
<dbReference type="GO" id="GO:0016740">
    <property type="term" value="F:transferase activity"/>
    <property type="evidence" value="ECO:0007669"/>
    <property type="project" value="UniProtKB-ARBA"/>
</dbReference>
<dbReference type="GO" id="GO:0000049">
    <property type="term" value="F:tRNA binding"/>
    <property type="evidence" value="ECO:0007669"/>
    <property type="project" value="UniProtKB-KW"/>
</dbReference>
<dbReference type="GO" id="GO:0006435">
    <property type="term" value="P:threonyl-tRNA aminoacylation"/>
    <property type="evidence" value="ECO:0007669"/>
    <property type="project" value="UniProtKB-UniRule"/>
</dbReference>
<dbReference type="CDD" id="cd01667">
    <property type="entry name" value="TGS_ThrRS"/>
    <property type="match status" value="1"/>
</dbReference>
<dbReference type="CDD" id="cd00860">
    <property type="entry name" value="ThrRS_anticodon"/>
    <property type="match status" value="1"/>
</dbReference>
<dbReference type="CDD" id="cd00771">
    <property type="entry name" value="ThrRS_core"/>
    <property type="match status" value="1"/>
</dbReference>
<dbReference type="FunFam" id="3.10.20.30:FF:000005">
    <property type="entry name" value="Threonine--tRNA ligase"/>
    <property type="match status" value="1"/>
</dbReference>
<dbReference type="FunFam" id="3.30.54.20:FF:000002">
    <property type="entry name" value="Threonine--tRNA ligase"/>
    <property type="match status" value="1"/>
</dbReference>
<dbReference type="FunFam" id="3.30.930.10:FF:000002">
    <property type="entry name" value="Threonine--tRNA ligase"/>
    <property type="match status" value="1"/>
</dbReference>
<dbReference type="FunFam" id="3.40.50.800:FF:000001">
    <property type="entry name" value="Threonine--tRNA ligase"/>
    <property type="match status" value="1"/>
</dbReference>
<dbReference type="FunFam" id="3.30.980.10:FF:000005">
    <property type="entry name" value="Threonyl-tRNA synthetase, mitochondrial"/>
    <property type="match status" value="1"/>
</dbReference>
<dbReference type="Gene3D" id="3.10.20.30">
    <property type="match status" value="1"/>
</dbReference>
<dbReference type="Gene3D" id="3.30.54.20">
    <property type="match status" value="1"/>
</dbReference>
<dbReference type="Gene3D" id="3.40.50.800">
    <property type="entry name" value="Anticodon-binding domain"/>
    <property type="match status" value="1"/>
</dbReference>
<dbReference type="Gene3D" id="3.30.930.10">
    <property type="entry name" value="Bira Bifunctional Protein, Domain 2"/>
    <property type="match status" value="1"/>
</dbReference>
<dbReference type="Gene3D" id="3.30.980.10">
    <property type="entry name" value="Threonyl-trna Synthetase, Chain A, domain 2"/>
    <property type="match status" value="1"/>
</dbReference>
<dbReference type="HAMAP" id="MF_00184">
    <property type="entry name" value="Thr_tRNA_synth"/>
    <property type="match status" value="1"/>
</dbReference>
<dbReference type="InterPro" id="IPR002314">
    <property type="entry name" value="aa-tRNA-synt_IIb"/>
</dbReference>
<dbReference type="InterPro" id="IPR006195">
    <property type="entry name" value="aa-tRNA-synth_II"/>
</dbReference>
<dbReference type="InterPro" id="IPR045864">
    <property type="entry name" value="aa-tRNA-synth_II/BPL/LPL"/>
</dbReference>
<dbReference type="InterPro" id="IPR004154">
    <property type="entry name" value="Anticodon-bd"/>
</dbReference>
<dbReference type="InterPro" id="IPR036621">
    <property type="entry name" value="Anticodon-bd_dom_sf"/>
</dbReference>
<dbReference type="InterPro" id="IPR012675">
    <property type="entry name" value="Beta-grasp_dom_sf"/>
</dbReference>
<dbReference type="InterPro" id="IPR004095">
    <property type="entry name" value="TGS"/>
</dbReference>
<dbReference type="InterPro" id="IPR012676">
    <property type="entry name" value="TGS-like"/>
</dbReference>
<dbReference type="InterPro" id="IPR002320">
    <property type="entry name" value="Thr-tRNA-ligase_IIa"/>
</dbReference>
<dbReference type="InterPro" id="IPR018163">
    <property type="entry name" value="Thr/Ala-tRNA-synth_IIc_edit"/>
</dbReference>
<dbReference type="InterPro" id="IPR047246">
    <property type="entry name" value="ThrRS_anticodon"/>
</dbReference>
<dbReference type="InterPro" id="IPR033728">
    <property type="entry name" value="ThrRS_core"/>
</dbReference>
<dbReference type="InterPro" id="IPR012947">
    <property type="entry name" value="tRNA_SAD"/>
</dbReference>
<dbReference type="NCBIfam" id="TIGR00418">
    <property type="entry name" value="thrS"/>
    <property type="match status" value="1"/>
</dbReference>
<dbReference type="PANTHER" id="PTHR11451:SF56">
    <property type="entry name" value="THREONINE--TRNA LIGASE 1"/>
    <property type="match status" value="1"/>
</dbReference>
<dbReference type="PANTHER" id="PTHR11451">
    <property type="entry name" value="THREONINE-TRNA LIGASE"/>
    <property type="match status" value="1"/>
</dbReference>
<dbReference type="Pfam" id="PF03129">
    <property type="entry name" value="HGTP_anticodon"/>
    <property type="match status" value="1"/>
</dbReference>
<dbReference type="Pfam" id="PF02824">
    <property type="entry name" value="TGS"/>
    <property type="match status" value="1"/>
</dbReference>
<dbReference type="Pfam" id="PF00587">
    <property type="entry name" value="tRNA-synt_2b"/>
    <property type="match status" value="1"/>
</dbReference>
<dbReference type="Pfam" id="PF07973">
    <property type="entry name" value="tRNA_SAD"/>
    <property type="match status" value="1"/>
</dbReference>
<dbReference type="PRINTS" id="PR01047">
    <property type="entry name" value="TRNASYNTHTHR"/>
</dbReference>
<dbReference type="SMART" id="SM00863">
    <property type="entry name" value="tRNA_SAD"/>
    <property type="match status" value="1"/>
</dbReference>
<dbReference type="SUPFAM" id="SSF52954">
    <property type="entry name" value="Class II aaRS ABD-related"/>
    <property type="match status" value="1"/>
</dbReference>
<dbReference type="SUPFAM" id="SSF55681">
    <property type="entry name" value="Class II aaRS and biotin synthetases"/>
    <property type="match status" value="1"/>
</dbReference>
<dbReference type="SUPFAM" id="SSF81271">
    <property type="entry name" value="TGS-like"/>
    <property type="match status" value="1"/>
</dbReference>
<dbReference type="SUPFAM" id="SSF55186">
    <property type="entry name" value="ThrRS/AlaRS common domain"/>
    <property type="match status" value="1"/>
</dbReference>
<dbReference type="PROSITE" id="PS50862">
    <property type="entry name" value="AA_TRNA_LIGASE_II"/>
    <property type="match status" value="1"/>
</dbReference>
<dbReference type="PROSITE" id="PS51880">
    <property type="entry name" value="TGS"/>
    <property type="match status" value="1"/>
</dbReference>
<comment type="function">
    <text evidence="1">Catalyzes the attachment of threonine to tRNA(Thr) in a two-step reaction: L-threonine is first activated by ATP to form Thr-AMP and then transferred to the acceptor end of tRNA(Thr). Also edits incorrectly charged L-seryl-tRNA(Thr).</text>
</comment>
<comment type="catalytic activity">
    <reaction evidence="1">
        <text>tRNA(Thr) + L-threonine + ATP = L-threonyl-tRNA(Thr) + AMP + diphosphate + H(+)</text>
        <dbReference type="Rhea" id="RHEA:24624"/>
        <dbReference type="Rhea" id="RHEA-COMP:9670"/>
        <dbReference type="Rhea" id="RHEA-COMP:9704"/>
        <dbReference type="ChEBI" id="CHEBI:15378"/>
        <dbReference type="ChEBI" id="CHEBI:30616"/>
        <dbReference type="ChEBI" id="CHEBI:33019"/>
        <dbReference type="ChEBI" id="CHEBI:57926"/>
        <dbReference type="ChEBI" id="CHEBI:78442"/>
        <dbReference type="ChEBI" id="CHEBI:78534"/>
        <dbReference type="ChEBI" id="CHEBI:456215"/>
        <dbReference type="EC" id="6.1.1.3"/>
    </reaction>
</comment>
<comment type="cofactor">
    <cofactor evidence="1">
        <name>Zn(2+)</name>
        <dbReference type="ChEBI" id="CHEBI:29105"/>
    </cofactor>
    <text evidence="1">Binds 1 zinc ion per subunit.</text>
</comment>
<comment type="subunit">
    <text evidence="1">Homodimer.</text>
</comment>
<comment type="subcellular location">
    <subcellularLocation>
        <location evidence="1">Cytoplasm</location>
    </subcellularLocation>
</comment>
<comment type="similarity">
    <text evidence="1">Belongs to the class-II aminoacyl-tRNA synthetase family.</text>
</comment>
<reference key="1">
    <citation type="journal article" date="2006" name="Proc. Natl. Acad. Sci. U.S.A.">
        <title>Molecular genetic anatomy of inter- and intraserotype variation in the human bacterial pathogen group A Streptococcus.</title>
        <authorList>
            <person name="Beres S.B."/>
            <person name="Richter E.W."/>
            <person name="Nagiec M.J."/>
            <person name="Sumby P."/>
            <person name="Porcella S.F."/>
            <person name="DeLeo F.R."/>
            <person name="Musser J.M."/>
        </authorList>
    </citation>
    <scope>NUCLEOTIDE SEQUENCE [LARGE SCALE GENOMIC DNA]</scope>
    <source>
        <strain>MGAS10750</strain>
    </source>
</reference>
<accession>Q1J7X1</accession>
<evidence type="ECO:0000255" key="1">
    <source>
        <dbReference type="HAMAP-Rule" id="MF_00184"/>
    </source>
</evidence>
<evidence type="ECO:0000255" key="2">
    <source>
        <dbReference type="PROSITE-ProRule" id="PRU01228"/>
    </source>
</evidence>
<keyword id="KW-0030">Aminoacyl-tRNA synthetase</keyword>
<keyword id="KW-0067">ATP-binding</keyword>
<keyword id="KW-0963">Cytoplasm</keyword>
<keyword id="KW-0436">Ligase</keyword>
<keyword id="KW-0479">Metal-binding</keyword>
<keyword id="KW-0547">Nucleotide-binding</keyword>
<keyword id="KW-0648">Protein biosynthesis</keyword>
<keyword id="KW-0694">RNA-binding</keyword>
<keyword id="KW-0820">tRNA-binding</keyword>
<keyword id="KW-0862">Zinc</keyword>
<sequence length="647" mass="74303">MIKITFPDGAVREFESGVTTFDIAESISKSLAKKALAGKFNDQLIDTTRAIEEDGSIEIVTPDHKDAYEVLRHSAAHLFAQAAKRLFPNLHLGVGPAIAEGFYYDTDNAEGQISNEDLPRIEAEMQKIVTENYPCIREEVTKEEALELFKDDPYKVELINEHAGAGLTVYRQGEFVDLCRGPHVPSTGRIQVFHLLNVAGAYWRGNSDNNMMQRIYGTAWFDKKDLKAYLTRLEEAKERDHRKLGKELDLFMISQEVGQGLPFWLPDGATIRRTLERYITDKELASGYQHVYTPPLASVELYKTSGHWDHYQEDMFPVMDMGDGEEFVLRPMNCPHHIQVYKNHVRSYRELPIRIAELGMMHRYEKSGALSGLQRVREMTLNDGHIFVTPEQIQEEFRRALQLIIDVYADFNLTDYRFRLSYRDPNDTHKYYDNDEMWENAQSMLKAALDEMGVDYFEAEGEAAFYGPKLDIQVKTALGNEETLSTIQLDFLLPERFDLKYIGADGEEHRPVMIHRGVISTMERFTAILIETYKGAFPTWLAPHQVTVIPISNEAHIDYAWEVAKTLRDRGVRADVDDRNEKMQYKIRASQTSKIPYQLIVGDKEMEDKSVNVRRYGSKATHTESVEEFVENILADIARKSRPDAQA</sequence>
<feature type="chain" id="PRO_1000020530" description="Threonine--tRNA ligase">
    <location>
        <begin position="1"/>
        <end position="647"/>
    </location>
</feature>
<feature type="domain" description="TGS" evidence="2">
    <location>
        <begin position="1"/>
        <end position="61"/>
    </location>
</feature>
<feature type="region of interest" description="Catalytic" evidence="1">
    <location>
        <begin position="240"/>
        <end position="538"/>
    </location>
</feature>
<feature type="binding site" evidence="1">
    <location>
        <position position="334"/>
    </location>
    <ligand>
        <name>Zn(2+)</name>
        <dbReference type="ChEBI" id="CHEBI:29105"/>
    </ligand>
</feature>
<feature type="binding site" evidence="1">
    <location>
        <position position="385"/>
    </location>
    <ligand>
        <name>Zn(2+)</name>
        <dbReference type="ChEBI" id="CHEBI:29105"/>
    </ligand>
</feature>
<feature type="binding site" evidence="1">
    <location>
        <position position="515"/>
    </location>
    <ligand>
        <name>Zn(2+)</name>
        <dbReference type="ChEBI" id="CHEBI:29105"/>
    </ligand>
</feature>